<reference key="1">
    <citation type="journal article" date="2006" name="J. Bacteriol.">
        <title>Comparison of the genome sequence of the poultry pathogen Bordetella avium with those of B. bronchiseptica, B. pertussis, and B. parapertussis reveals extensive diversity in surface structures associated with host interaction.</title>
        <authorList>
            <person name="Sebaihia M."/>
            <person name="Preston A."/>
            <person name="Maskell D.J."/>
            <person name="Kuzmiak H."/>
            <person name="Connell T.D."/>
            <person name="King N.D."/>
            <person name="Orndorff P.E."/>
            <person name="Miyamoto D.M."/>
            <person name="Thomson N.R."/>
            <person name="Harris D."/>
            <person name="Goble A."/>
            <person name="Lord A."/>
            <person name="Murphy L."/>
            <person name="Quail M.A."/>
            <person name="Rutter S."/>
            <person name="Squares R."/>
            <person name="Squares S."/>
            <person name="Woodward J."/>
            <person name="Parkhill J."/>
            <person name="Temple L.M."/>
        </authorList>
    </citation>
    <scope>NUCLEOTIDE SEQUENCE [LARGE SCALE GENOMIC DNA]</scope>
    <source>
        <strain>197N</strain>
    </source>
</reference>
<sequence>MRHGNGLRKLNRTSSHRLAMFRNMAVSLITHEAIKTTLPKAKELRRVIEPLITLGKEPTLANKRLAFARLRDRDAVVKLFAEIGPRFANRNGGYTRVLKMGFRQGDNAPMAYMELVDRPEVDASEADGAAE</sequence>
<protein>
    <recommendedName>
        <fullName evidence="1">Large ribosomal subunit protein bL17</fullName>
    </recommendedName>
    <alternativeName>
        <fullName evidence="2">50S ribosomal protein L17</fullName>
    </alternativeName>
</protein>
<evidence type="ECO:0000255" key="1">
    <source>
        <dbReference type="HAMAP-Rule" id="MF_01368"/>
    </source>
</evidence>
<evidence type="ECO:0000305" key="2"/>
<name>RL17_BORA1</name>
<dbReference type="EMBL" id="AM167904">
    <property type="protein sequence ID" value="CAJ47645.1"/>
    <property type="molecule type" value="Genomic_DNA"/>
</dbReference>
<dbReference type="RefSeq" id="WP_012415764.1">
    <property type="nucleotide sequence ID" value="NC_010645.1"/>
</dbReference>
<dbReference type="SMR" id="Q2L235"/>
<dbReference type="STRING" id="360910.BAV0061"/>
<dbReference type="GeneID" id="92936694"/>
<dbReference type="KEGG" id="bav:BAV0061"/>
<dbReference type="eggNOG" id="COG0203">
    <property type="taxonomic scope" value="Bacteria"/>
</dbReference>
<dbReference type="HOGENOM" id="CLU_074407_2_0_4"/>
<dbReference type="OrthoDB" id="9809073at2"/>
<dbReference type="Proteomes" id="UP000001977">
    <property type="component" value="Chromosome"/>
</dbReference>
<dbReference type="GO" id="GO:0022625">
    <property type="term" value="C:cytosolic large ribosomal subunit"/>
    <property type="evidence" value="ECO:0007669"/>
    <property type="project" value="TreeGrafter"/>
</dbReference>
<dbReference type="GO" id="GO:0003735">
    <property type="term" value="F:structural constituent of ribosome"/>
    <property type="evidence" value="ECO:0007669"/>
    <property type="project" value="InterPro"/>
</dbReference>
<dbReference type="GO" id="GO:0006412">
    <property type="term" value="P:translation"/>
    <property type="evidence" value="ECO:0007669"/>
    <property type="project" value="UniProtKB-UniRule"/>
</dbReference>
<dbReference type="FunFam" id="3.90.1030.10:FF:000001">
    <property type="entry name" value="50S ribosomal protein L17"/>
    <property type="match status" value="1"/>
</dbReference>
<dbReference type="Gene3D" id="3.90.1030.10">
    <property type="entry name" value="Ribosomal protein L17"/>
    <property type="match status" value="1"/>
</dbReference>
<dbReference type="HAMAP" id="MF_01368">
    <property type="entry name" value="Ribosomal_bL17"/>
    <property type="match status" value="1"/>
</dbReference>
<dbReference type="InterPro" id="IPR000456">
    <property type="entry name" value="Ribosomal_bL17"/>
</dbReference>
<dbReference type="InterPro" id="IPR047859">
    <property type="entry name" value="Ribosomal_bL17_CS"/>
</dbReference>
<dbReference type="InterPro" id="IPR036373">
    <property type="entry name" value="Ribosomal_bL17_sf"/>
</dbReference>
<dbReference type="NCBIfam" id="TIGR00059">
    <property type="entry name" value="L17"/>
    <property type="match status" value="1"/>
</dbReference>
<dbReference type="PANTHER" id="PTHR14413:SF16">
    <property type="entry name" value="LARGE RIBOSOMAL SUBUNIT PROTEIN BL17M"/>
    <property type="match status" value="1"/>
</dbReference>
<dbReference type="PANTHER" id="PTHR14413">
    <property type="entry name" value="RIBOSOMAL PROTEIN L17"/>
    <property type="match status" value="1"/>
</dbReference>
<dbReference type="Pfam" id="PF01196">
    <property type="entry name" value="Ribosomal_L17"/>
    <property type="match status" value="1"/>
</dbReference>
<dbReference type="SUPFAM" id="SSF64263">
    <property type="entry name" value="Prokaryotic ribosomal protein L17"/>
    <property type="match status" value="1"/>
</dbReference>
<dbReference type="PROSITE" id="PS01167">
    <property type="entry name" value="RIBOSOMAL_L17"/>
    <property type="match status" value="1"/>
</dbReference>
<gene>
    <name evidence="1" type="primary">rplQ</name>
    <name type="ordered locus">BAV0061</name>
</gene>
<keyword id="KW-1185">Reference proteome</keyword>
<keyword id="KW-0687">Ribonucleoprotein</keyword>
<keyword id="KW-0689">Ribosomal protein</keyword>
<feature type="chain" id="PRO_0000267834" description="Large ribosomal subunit protein bL17">
    <location>
        <begin position="1"/>
        <end position="131"/>
    </location>
</feature>
<proteinExistence type="inferred from homology"/>
<accession>Q2L235</accession>
<organism>
    <name type="scientific">Bordetella avium (strain 197N)</name>
    <dbReference type="NCBI Taxonomy" id="360910"/>
    <lineage>
        <taxon>Bacteria</taxon>
        <taxon>Pseudomonadati</taxon>
        <taxon>Pseudomonadota</taxon>
        <taxon>Betaproteobacteria</taxon>
        <taxon>Burkholderiales</taxon>
        <taxon>Alcaligenaceae</taxon>
        <taxon>Bordetella</taxon>
    </lineage>
</organism>
<comment type="subunit">
    <text evidence="1">Part of the 50S ribosomal subunit. Contacts protein L32.</text>
</comment>
<comment type="similarity">
    <text evidence="1">Belongs to the bacterial ribosomal protein bL17 family.</text>
</comment>